<keyword id="KW-1185">Reference proteome</keyword>
<keyword id="KW-0687">Ribonucleoprotein</keyword>
<keyword id="KW-0689">Ribosomal protein</keyword>
<keyword id="KW-0694">RNA-binding</keyword>
<keyword id="KW-0699">rRNA-binding</keyword>
<feature type="chain" id="PRO_0000130777" description="Large ribosomal subunit protein uL24">
    <location>
        <begin position="1"/>
        <end position="123"/>
    </location>
</feature>
<evidence type="ECO:0000255" key="1">
    <source>
        <dbReference type="HAMAP-Rule" id="MF_01326"/>
    </source>
</evidence>
<evidence type="ECO:0000305" key="2"/>
<name>RL24_PYRAE</name>
<comment type="function">
    <text evidence="1">One of two assembly initiator proteins, it binds directly to the 5'-end of the 23S rRNA, where it nucleates assembly of the 50S subunit.</text>
</comment>
<comment type="function">
    <text evidence="1">Located at the polypeptide exit tunnel on the outside of the subunit.</text>
</comment>
<comment type="subunit">
    <text evidence="1">Part of the 50S ribosomal subunit.</text>
</comment>
<comment type="similarity">
    <text evidence="1">Belongs to the universal ribosomal protein uL24 family.</text>
</comment>
<protein>
    <recommendedName>
        <fullName evidence="1">Large ribosomal subunit protein uL24</fullName>
    </recommendedName>
    <alternativeName>
        <fullName evidence="2">50S ribosomal protein L24</fullName>
    </alternativeName>
</protein>
<sequence length="123" mass="14197">MSFTTSAQPRKQRRSLYKAPLHLRRKLFNAKLSPELAKKLGVKRLPVRRGDTVLILRGDFKGVTGKVVKVDLKRVRIYVEGATRTNSRGQTVYYPIHPSKVMIVDVDLSDKARQKIIERRKKK</sequence>
<dbReference type="EMBL" id="AE009441">
    <property type="protein sequence ID" value="AAL64828.1"/>
    <property type="molecule type" value="Genomic_DNA"/>
</dbReference>
<dbReference type="RefSeq" id="WP_011009295.1">
    <property type="nucleotide sequence ID" value="NC_003364.1"/>
</dbReference>
<dbReference type="SMR" id="Q8ZTD4"/>
<dbReference type="FunCoup" id="Q8ZTD4">
    <property type="interactions" value="213"/>
</dbReference>
<dbReference type="STRING" id="178306.PAE3312"/>
<dbReference type="EnsemblBacteria" id="AAL64828">
    <property type="protein sequence ID" value="AAL64828"/>
    <property type="gene ID" value="PAE3312"/>
</dbReference>
<dbReference type="GeneID" id="1464017"/>
<dbReference type="KEGG" id="pai:PAE3312"/>
<dbReference type="PATRIC" id="fig|178306.9.peg.2492"/>
<dbReference type="eggNOG" id="arCOG04094">
    <property type="taxonomic scope" value="Archaea"/>
</dbReference>
<dbReference type="HOGENOM" id="CLU_093240_2_1_2"/>
<dbReference type="InParanoid" id="Q8ZTD4"/>
<dbReference type="Proteomes" id="UP000002439">
    <property type="component" value="Chromosome"/>
</dbReference>
<dbReference type="GO" id="GO:0022625">
    <property type="term" value="C:cytosolic large ribosomal subunit"/>
    <property type="evidence" value="ECO:0000318"/>
    <property type="project" value="GO_Central"/>
</dbReference>
<dbReference type="GO" id="GO:0003723">
    <property type="term" value="F:RNA binding"/>
    <property type="evidence" value="ECO:0000318"/>
    <property type="project" value="GO_Central"/>
</dbReference>
<dbReference type="GO" id="GO:0019843">
    <property type="term" value="F:rRNA binding"/>
    <property type="evidence" value="ECO:0007669"/>
    <property type="project" value="UniProtKB-UniRule"/>
</dbReference>
<dbReference type="GO" id="GO:0003735">
    <property type="term" value="F:structural constituent of ribosome"/>
    <property type="evidence" value="ECO:0000318"/>
    <property type="project" value="GO_Central"/>
</dbReference>
<dbReference type="GO" id="GO:0002181">
    <property type="term" value="P:cytoplasmic translation"/>
    <property type="evidence" value="ECO:0000318"/>
    <property type="project" value="GO_Central"/>
</dbReference>
<dbReference type="GO" id="GO:0042273">
    <property type="term" value="P:ribosomal large subunit biogenesis"/>
    <property type="evidence" value="ECO:0000318"/>
    <property type="project" value="GO_Central"/>
</dbReference>
<dbReference type="CDD" id="cd06089">
    <property type="entry name" value="KOW_RPL26"/>
    <property type="match status" value="1"/>
</dbReference>
<dbReference type="FunFam" id="2.30.30.30:FF:000009">
    <property type="entry name" value="60S ribosomal protein L26"/>
    <property type="match status" value="1"/>
</dbReference>
<dbReference type="Gene3D" id="2.30.30.30">
    <property type="match status" value="1"/>
</dbReference>
<dbReference type="HAMAP" id="MF_01326_A">
    <property type="entry name" value="Ribosomal_uL24_A"/>
    <property type="match status" value="1"/>
</dbReference>
<dbReference type="InterPro" id="IPR005824">
    <property type="entry name" value="KOW"/>
</dbReference>
<dbReference type="InterPro" id="IPR014722">
    <property type="entry name" value="Rib_uL2_dom2"/>
</dbReference>
<dbReference type="InterPro" id="IPR005825">
    <property type="entry name" value="Ribosomal_uL24_CS"/>
</dbReference>
<dbReference type="InterPro" id="IPR005756">
    <property type="entry name" value="Ribosomal_uL24_euk/arc"/>
</dbReference>
<dbReference type="InterPro" id="IPR041988">
    <property type="entry name" value="Ribosomal_uL24_KOW"/>
</dbReference>
<dbReference type="InterPro" id="IPR008991">
    <property type="entry name" value="Translation_prot_SH3-like_sf"/>
</dbReference>
<dbReference type="NCBIfam" id="TIGR01080">
    <property type="entry name" value="rplX_A_E"/>
    <property type="match status" value="1"/>
</dbReference>
<dbReference type="PANTHER" id="PTHR11143">
    <property type="entry name" value="60S RIBOSOMAL PROTEIN L26 FAMILY MEMBER"/>
    <property type="match status" value="1"/>
</dbReference>
<dbReference type="Pfam" id="PF00467">
    <property type="entry name" value="KOW"/>
    <property type="match status" value="1"/>
</dbReference>
<dbReference type="Pfam" id="PF16906">
    <property type="entry name" value="Ribosomal_L26"/>
    <property type="match status" value="1"/>
</dbReference>
<dbReference type="SMART" id="SM00739">
    <property type="entry name" value="KOW"/>
    <property type="match status" value="1"/>
</dbReference>
<dbReference type="SUPFAM" id="SSF50104">
    <property type="entry name" value="Translation proteins SH3-like domain"/>
    <property type="match status" value="1"/>
</dbReference>
<dbReference type="PROSITE" id="PS01108">
    <property type="entry name" value="RIBOSOMAL_L24"/>
    <property type="match status" value="1"/>
</dbReference>
<proteinExistence type="inferred from homology"/>
<accession>Q8ZTD4</accession>
<organism>
    <name type="scientific">Pyrobaculum aerophilum (strain ATCC 51768 / DSM 7523 / JCM 9630 / CIP 104966 / NBRC 100827 / IM2)</name>
    <dbReference type="NCBI Taxonomy" id="178306"/>
    <lineage>
        <taxon>Archaea</taxon>
        <taxon>Thermoproteota</taxon>
        <taxon>Thermoprotei</taxon>
        <taxon>Thermoproteales</taxon>
        <taxon>Thermoproteaceae</taxon>
        <taxon>Pyrobaculum</taxon>
    </lineage>
</organism>
<gene>
    <name evidence="1" type="primary">rpl24</name>
    <name type="ordered locus">PAE3312</name>
</gene>
<reference key="1">
    <citation type="journal article" date="2002" name="Proc. Natl. Acad. Sci. U.S.A.">
        <title>Genome sequence of the hyperthermophilic crenarchaeon Pyrobaculum aerophilum.</title>
        <authorList>
            <person name="Fitz-Gibbon S.T."/>
            <person name="Ladner H."/>
            <person name="Kim U.-J."/>
            <person name="Stetter K.O."/>
            <person name="Simon M.I."/>
            <person name="Miller J.H."/>
        </authorList>
    </citation>
    <scope>NUCLEOTIDE SEQUENCE [LARGE SCALE GENOMIC DNA]</scope>
    <source>
        <strain>ATCC 51768 / DSM 7523 / JCM 9630 / CIP 104966 / NBRC 100827 / IM2</strain>
    </source>
</reference>